<accession>I1Z8E8</accession>
<reference key="1">
    <citation type="journal article" date="2015" name="New Phytol.">
        <title>Overexpression of Laccaria bicolor aquaporin JQ585595 alters root water transport properties in ectomycorrhizal white spruce (Picea glauca) seedlings.</title>
        <authorList>
            <person name="Xu H."/>
            <person name="Kemppainen M."/>
            <person name="El Kayal W."/>
            <person name="Lee S.H."/>
            <person name="Pardo A.G."/>
            <person name="Cooke J.E."/>
            <person name="Zwiazek J.J."/>
        </authorList>
    </citation>
    <scope>NUCLEOTIDE SEQUENCE [MRNA]</scope>
    <scope>FUNCTION</scope>
    <scope>TRANSPORTER ACTIVITY</scope>
    <scope>TOPOLOGY</scope>
    <source>
        <strain>UAMH8232</strain>
    </source>
</reference>
<reference key="2">
    <citation type="journal article" date="2015" name="Plant Cell Environ.">
        <title>Laccaria bicolor aquaporin LbAQP1 is required for Hartig net development in trembling aspen (Populus tremuloides).</title>
        <authorList>
            <person name="Navarro-RoDenas A."/>
            <person name="Xu H."/>
            <person name="Kemppainen M."/>
            <person name="Pardo A.G."/>
            <person name="Zwiazek J.J."/>
        </authorList>
    </citation>
    <scope>FUNCTION</scope>
</reference>
<reference key="3">
    <citation type="journal article" date="2016" name="Mycorrhiza">
        <title>Transcript profiling of aquaporins during basidiocarp development in Laccaria bicolor ectomycorrhizal with Picea glauca.</title>
        <authorList>
            <person name="Xu H."/>
            <person name="Navarro-Rodenas A."/>
            <person name="Cooke J.E."/>
            <person name="Zwiazek J.J."/>
        </authorList>
    </citation>
    <scope>INDUCTION</scope>
    <scope>FUNCTION</scope>
</reference>
<reference key="4">
    <citation type="journal article" date="2016" name="Mycorrhiza">
        <title>Hydraulic conductivity and aquaporin transcription in roots of trembling aspen (Populus tremuloides) seedlings colonized by Laccaria bicolor.</title>
        <authorList>
            <person name="Xu H."/>
            <person name="Cooke J.E."/>
            <person name="Kemppainen M."/>
            <person name="Pardo A.G."/>
            <person name="Zwiazek J.J."/>
        </authorList>
    </citation>
    <scope>FUNCTION</scope>
</reference>
<reference key="5">
    <citation type="journal article" date="2019" name="J. Exp. Bot.">
        <title>Local root ABA/cytokinin status and aquaporins regulate poplar responses to mild drought stress independently of the ectomycorrhizal fungus Laccaria bicolor.</title>
        <authorList>
            <person name="Calvo-Polanco M."/>
            <person name="Armada E."/>
            <person name="Zamarreno A.M."/>
            <person name="Garcia-Mina J.M."/>
            <person name="Aroca R."/>
        </authorList>
    </citation>
    <scope>INDUCTION</scope>
</reference>
<dbReference type="EMBL" id="JQ585595">
    <property type="protein sequence ID" value="AFJ15558.1"/>
    <property type="molecule type" value="mRNA"/>
</dbReference>
<dbReference type="SMR" id="I1Z8E8"/>
<dbReference type="GO" id="GO:0005886">
    <property type="term" value="C:plasma membrane"/>
    <property type="evidence" value="ECO:0007669"/>
    <property type="project" value="TreeGrafter"/>
</dbReference>
<dbReference type="GO" id="GO:0015254">
    <property type="term" value="F:glycerol channel activity"/>
    <property type="evidence" value="ECO:0007669"/>
    <property type="project" value="TreeGrafter"/>
</dbReference>
<dbReference type="GO" id="GO:0015250">
    <property type="term" value="F:water channel activity"/>
    <property type="evidence" value="ECO:0007669"/>
    <property type="project" value="TreeGrafter"/>
</dbReference>
<dbReference type="CDD" id="cd00333">
    <property type="entry name" value="MIP"/>
    <property type="match status" value="1"/>
</dbReference>
<dbReference type="FunFam" id="1.20.1080.10:FF:000027">
    <property type="entry name" value="MIP aquaporin"/>
    <property type="match status" value="1"/>
</dbReference>
<dbReference type="Gene3D" id="1.20.1080.10">
    <property type="entry name" value="Glycerol uptake facilitator protein"/>
    <property type="match status" value="1"/>
</dbReference>
<dbReference type="InterPro" id="IPR023271">
    <property type="entry name" value="Aquaporin-like"/>
</dbReference>
<dbReference type="InterPro" id="IPR000425">
    <property type="entry name" value="MIP"/>
</dbReference>
<dbReference type="InterPro" id="IPR050363">
    <property type="entry name" value="MIP/Aquaporin"/>
</dbReference>
<dbReference type="InterPro" id="IPR022357">
    <property type="entry name" value="MIP_CS"/>
</dbReference>
<dbReference type="NCBIfam" id="TIGR00861">
    <property type="entry name" value="MIP"/>
    <property type="match status" value="1"/>
</dbReference>
<dbReference type="PANTHER" id="PTHR43829">
    <property type="entry name" value="AQUAPORIN OR AQUAGLYCEROPORIN RELATED"/>
    <property type="match status" value="1"/>
</dbReference>
<dbReference type="PANTHER" id="PTHR43829:SF9">
    <property type="entry name" value="AQUAPORIN-9"/>
    <property type="match status" value="1"/>
</dbReference>
<dbReference type="Pfam" id="PF00230">
    <property type="entry name" value="MIP"/>
    <property type="match status" value="1"/>
</dbReference>
<dbReference type="PRINTS" id="PR00783">
    <property type="entry name" value="MINTRINSICP"/>
</dbReference>
<dbReference type="SUPFAM" id="SSF81338">
    <property type="entry name" value="Aquaporin-like"/>
    <property type="match status" value="1"/>
</dbReference>
<dbReference type="PROSITE" id="PS00221">
    <property type="entry name" value="MIP"/>
    <property type="match status" value="1"/>
</dbReference>
<feature type="chain" id="PRO_0000457450" description="Aquaporin-6">
    <location>
        <begin position="1"/>
        <end position="312"/>
    </location>
</feature>
<feature type="topological domain" description="Cytoplasmic" evidence="10">
    <location>
        <begin position="1"/>
        <end position="50"/>
    </location>
</feature>
<feature type="transmembrane region" description="Helical" evidence="1">
    <location>
        <begin position="51"/>
        <end position="71"/>
    </location>
</feature>
<feature type="topological domain" description="Extracellular" evidence="10">
    <location>
        <begin position="72"/>
        <end position="89"/>
    </location>
</feature>
<feature type="transmembrane region" description="Helical" evidence="1">
    <location>
        <begin position="90"/>
        <end position="110"/>
    </location>
</feature>
<feature type="topological domain" description="Cytoplasmic" evidence="10">
    <location>
        <begin position="111"/>
        <end position="128"/>
    </location>
</feature>
<feature type="transmembrane region" description="Helical" evidence="1">
    <location>
        <begin position="129"/>
        <end position="149"/>
    </location>
</feature>
<feature type="topological domain" description="Extracellular" evidence="10">
    <location>
        <begin position="150"/>
        <end position="183"/>
    </location>
</feature>
<feature type="transmembrane region" description="Helical" evidence="1">
    <location>
        <begin position="184"/>
        <end position="204"/>
    </location>
</feature>
<feature type="topological domain" description="Cytoplasmic" evidence="10">
    <location>
        <begin position="205"/>
        <end position="213"/>
    </location>
</feature>
<feature type="transmembrane region" description="Helical" evidence="1">
    <location>
        <begin position="214"/>
        <end position="234"/>
    </location>
</feature>
<feature type="topological domain" description="Extracellular" evidence="10">
    <location>
        <begin position="235"/>
        <end position="267"/>
    </location>
</feature>
<feature type="transmembrane region" description="Helical" evidence="1">
    <location>
        <begin position="268"/>
        <end position="288"/>
    </location>
</feature>
<feature type="topological domain" description="Cytoplasmic" evidence="10">
    <location>
        <begin position="289"/>
        <end position="312"/>
    </location>
</feature>
<feature type="short sequence motif" description="NPA 1" evidence="10">
    <location>
        <begin position="111"/>
        <end position="113"/>
    </location>
</feature>
<feature type="short sequence motif" description="NPA 2" evidence="10">
    <location>
        <begin position="241"/>
        <end position="243"/>
    </location>
</feature>
<feature type="glycosylation site" description="N-linked (GlcNAc...) asparagine" evidence="2">
    <location>
        <position position="183"/>
    </location>
</feature>
<keyword id="KW-0325">Glycoprotein</keyword>
<keyword id="KW-0472">Membrane</keyword>
<keyword id="KW-0677">Repeat</keyword>
<keyword id="KW-0812">Transmembrane</keyword>
<keyword id="KW-1133">Transmembrane helix</keyword>
<keyword id="KW-0813">Transport</keyword>
<evidence type="ECO:0000255" key="1"/>
<evidence type="ECO:0000255" key="2">
    <source>
        <dbReference type="PROSITE-ProRule" id="PRU00498"/>
    </source>
</evidence>
<evidence type="ECO:0000269" key="3">
    <source>
    </source>
</evidence>
<evidence type="ECO:0000269" key="4">
    <source>
    </source>
</evidence>
<evidence type="ECO:0000269" key="5">
    <source>
    </source>
</evidence>
<evidence type="ECO:0000269" key="6">
    <source>
    </source>
</evidence>
<evidence type="ECO:0000269" key="7">
    <source>
    </source>
</evidence>
<evidence type="ECO:0000303" key="8">
    <source>
    </source>
</evidence>
<evidence type="ECO:0000305" key="9"/>
<evidence type="ECO:0000305" key="10">
    <source>
    </source>
</evidence>
<protein>
    <recommendedName>
        <fullName evidence="8">Aquaporin-6</fullName>
    </recommendedName>
</protein>
<gene>
    <name evidence="8" type="primary">AQP6</name>
</gene>
<comment type="function">
    <text evidence="3 4 5 6">Water channel required to facilitate the transport of water across membranes (PubMed:25323307). Does not mediate the transport carbon dioxide nor nitric oxide across the membrane (PubMed:25857333). Plays a key role in root water transport of mycorrhizal plant such ectomycorrhizal white spruce or trembling aspen via the hydration at the hyphal-root interphase (PubMed:25323307, PubMed:26861480). Contributes in fungal cellular processes during the basidiocarp formation (PubMed:25957233).</text>
</comment>
<comment type="catalytic activity">
    <reaction evidence="3">
        <text>H2O(in) = H2O(out)</text>
        <dbReference type="Rhea" id="RHEA:29667"/>
        <dbReference type="ChEBI" id="CHEBI:15377"/>
    </reaction>
</comment>
<comment type="subcellular location">
    <subcellularLocation>
        <location evidence="1">Membrane</location>
        <topology evidence="1">Multi-pass membrane protein</topology>
    </subcellularLocation>
</comment>
<comment type="induction">
    <text evidence="5 7">Expression is high in vegetative mycelia and highly up-regulated during development of the basidiocarp (PubMed:25957233). Expression is positively correlated with root abscisic acid (ABA) content during ectomycorrhizal interaction with poplar trees (PubMed:31504720).</text>
</comment>
<comment type="domain">
    <text evidence="10">Aquaporins contain two tandem repeats each containing three membrane-spanning domains and a pore-forming loop with the signature motif Asn-Pro-Ala (NPA).</text>
</comment>
<comment type="similarity">
    <text evidence="9">Belongs to the MIP/aquaporin (TC 1.A.8) family.</text>
</comment>
<name>AQP6_LACBI</name>
<organism>
    <name type="scientific">Laccaria bicolor</name>
    <name type="common">Bicoloured deceiver</name>
    <name type="synonym">Laccaria laccata var. bicolor</name>
    <dbReference type="NCBI Taxonomy" id="29883"/>
    <lineage>
        <taxon>Eukaryota</taxon>
        <taxon>Fungi</taxon>
        <taxon>Dikarya</taxon>
        <taxon>Basidiomycota</taxon>
        <taxon>Agaricomycotina</taxon>
        <taxon>Agaricomycetes</taxon>
        <taxon>Agaricomycetidae</taxon>
        <taxon>Agaricales</taxon>
        <taxon>Agaricineae</taxon>
        <taxon>Hydnangiaceae</taxon>
        <taxon>Laccaria</taxon>
    </lineage>
</organism>
<proteinExistence type="evidence at protein level"/>
<sequence>MDDKFDDDALPNSKTTAKDYEDKLPEYDYTTTFPNTWMRLREPFREYFAEFVGVAVLIIFGVGADCQVVLSANTGVASSPKGSYLSLNCGWAIGTAMGVWISGGISGGHINPAVTLAMATWRGFPWWKVPGFIFAQLLGGIVGAGLVYVNYIHAIDIVEGGRHIRTLDTAGLFATYAADYMTNLSCFFSEFLATAVLIIVIHAMNDKRNTPPPAGIVPFVLFFLILGIGASLGMETGYAINPARDLGPRMLTAMVGYGRQVFAFRNQYWIWCPVLAPFLGAQVGTIFYDLFFYKGQDNVFGRLGSHIHISPA</sequence>